<feature type="chain" id="PRO_1000125130" description="Fluoride-specific ion channel FluC">
    <location>
        <begin position="1"/>
        <end position="136"/>
    </location>
</feature>
<feature type="transmembrane region" description="Helical" evidence="1">
    <location>
        <begin position="3"/>
        <end position="23"/>
    </location>
</feature>
<feature type="transmembrane region" description="Helical" evidence="1">
    <location>
        <begin position="46"/>
        <end position="66"/>
    </location>
</feature>
<feature type="transmembrane region" description="Helical" evidence="1">
    <location>
        <begin position="78"/>
        <end position="98"/>
    </location>
</feature>
<feature type="transmembrane region" description="Helical" evidence="1">
    <location>
        <begin position="109"/>
        <end position="129"/>
    </location>
</feature>
<feature type="binding site" evidence="1">
    <location>
        <position position="86"/>
    </location>
    <ligand>
        <name>Na(+)</name>
        <dbReference type="ChEBI" id="CHEBI:29101"/>
        <note>structural</note>
    </ligand>
</feature>
<feature type="binding site" evidence="1">
    <location>
        <position position="89"/>
    </location>
    <ligand>
        <name>Na(+)</name>
        <dbReference type="ChEBI" id="CHEBI:29101"/>
        <note>structural</note>
    </ligand>
</feature>
<keyword id="KW-0997">Cell inner membrane</keyword>
<keyword id="KW-1003">Cell membrane</keyword>
<keyword id="KW-0407">Ion channel</keyword>
<keyword id="KW-0406">Ion transport</keyword>
<keyword id="KW-0472">Membrane</keyword>
<keyword id="KW-0479">Metal-binding</keyword>
<keyword id="KW-1185">Reference proteome</keyword>
<keyword id="KW-0915">Sodium</keyword>
<keyword id="KW-0812">Transmembrane</keyword>
<keyword id="KW-1133">Transmembrane helix</keyword>
<keyword id="KW-0813">Transport</keyword>
<sequence length="136" mass="14424">MSTLPPLYATLNVALGGAIGAVLRYQMGRWMTGWLGAPAMSVFPWATLAINALGSLLMGVLAGVLFKLSPGVQDQWRLLIGTGILGGFTTFSAFSLEVWVMVERGQPAFAALYVVLSVSLAISALVFGLMLTRLFA</sequence>
<comment type="function">
    <text evidence="1">Fluoride-specific ion channel. Important for reducing fluoride concentration in the cell, thus reducing its toxicity.</text>
</comment>
<comment type="catalytic activity">
    <reaction evidence="1">
        <text>fluoride(in) = fluoride(out)</text>
        <dbReference type="Rhea" id="RHEA:76159"/>
        <dbReference type="ChEBI" id="CHEBI:17051"/>
    </reaction>
    <physiologicalReaction direction="left-to-right" evidence="1">
        <dbReference type="Rhea" id="RHEA:76160"/>
    </physiologicalReaction>
</comment>
<comment type="activity regulation">
    <text evidence="1">Na(+) is not transported, but it plays an essential structural role and its presence is essential for fluoride channel function.</text>
</comment>
<comment type="subcellular location">
    <subcellularLocation>
        <location evidence="1">Cell inner membrane</location>
        <topology evidence="1">Multi-pass membrane protein</topology>
    </subcellularLocation>
</comment>
<comment type="similarity">
    <text evidence="1">Belongs to the fluoride channel Fluc/FEX (TC 1.A.43) family.</text>
</comment>
<dbReference type="EMBL" id="CP000157">
    <property type="protein sequence ID" value="ABC62362.1"/>
    <property type="molecule type" value="Genomic_DNA"/>
</dbReference>
<dbReference type="RefSeq" id="WP_011413238.1">
    <property type="nucleotide sequence ID" value="NC_007722.1"/>
</dbReference>
<dbReference type="SMR" id="Q2ND79"/>
<dbReference type="STRING" id="314225.ELI_01350"/>
<dbReference type="KEGG" id="eli:ELI_01350"/>
<dbReference type="eggNOG" id="COG0239">
    <property type="taxonomic scope" value="Bacteria"/>
</dbReference>
<dbReference type="HOGENOM" id="CLU_114342_2_3_5"/>
<dbReference type="OrthoDB" id="9806299at2"/>
<dbReference type="Proteomes" id="UP000008808">
    <property type="component" value="Chromosome"/>
</dbReference>
<dbReference type="GO" id="GO:0005886">
    <property type="term" value="C:plasma membrane"/>
    <property type="evidence" value="ECO:0007669"/>
    <property type="project" value="UniProtKB-SubCell"/>
</dbReference>
<dbReference type="GO" id="GO:0062054">
    <property type="term" value="F:fluoride channel activity"/>
    <property type="evidence" value="ECO:0007669"/>
    <property type="project" value="UniProtKB-UniRule"/>
</dbReference>
<dbReference type="GO" id="GO:0046872">
    <property type="term" value="F:metal ion binding"/>
    <property type="evidence" value="ECO:0007669"/>
    <property type="project" value="UniProtKB-KW"/>
</dbReference>
<dbReference type="GO" id="GO:0140114">
    <property type="term" value="P:cellular detoxification of fluoride"/>
    <property type="evidence" value="ECO:0007669"/>
    <property type="project" value="UniProtKB-UniRule"/>
</dbReference>
<dbReference type="HAMAP" id="MF_00454">
    <property type="entry name" value="FluC"/>
    <property type="match status" value="1"/>
</dbReference>
<dbReference type="InterPro" id="IPR003691">
    <property type="entry name" value="FluC"/>
</dbReference>
<dbReference type="NCBIfam" id="TIGR00494">
    <property type="entry name" value="crcB"/>
    <property type="match status" value="1"/>
</dbReference>
<dbReference type="PANTHER" id="PTHR28259">
    <property type="entry name" value="FLUORIDE EXPORT PROTEIN 1-RELATED"/>
    <property type="match status" value="1"/>
</dbReference>
<dbReference type="PANTHER" id="PTHR28259:SF1">
    <property type="entry name" value="FLUORIDE EXPORT PROTEIN 1-RELATED"/>
    <property type="match status" value="1"/>
</dbReference>
<dbReference type="Pfam" id="PF02537">
    <property type="entry name" value="CRCB"/>
    <property type="match status" value="1"/>
</dbReference>
<protein>
    <recommendedName>
        <fullName evidence="1">Fluoride-specific ion channel FluC</fullName>
    </recommendedName>
</protein>
<gene>
    <name evidence="1" type="primary">fluC</name>
    <name evidence="1" type="synonym">crcB</name>
    <name type="ordered locus">ELI_01350</name>
</gene>
<name>FLUC_ERYLH</name>
<organism>
    <name type="scientific">Erythrobacter litoralis (strain HTCC2594)</name>
    <dbReference type="NCBI Taxonomy" id="314225"/>
    <lineage>
        <taxon>Bacteria</taxon>
        <taxon>Pseudomonadati</taxon>
        <taxon>Pseudomonadota</taxon>
        <taxon>Alphaproteobacteria</taxon>
        <taxon>Sphingomonadales</taxon>
        <taxon>Erythrobacteraceae</taxon>
        <taxon>Erythrobacter/Porphyrobacter group</taxon>
        <taxon>Erythrobacter</taxon>
    </lineage>
</organism>
<accession>Q2ND79</accession>
<proteinExistence type="inferred from homology"/>
<evidence type="ECO:0000255" key="1">
    <source>
        <dbReference type="HAMAP-Rule" id="MF_00454"/>
    </source>
</evidence>
<reference key="1">
    <citation type="journal article" date="2009" name="J. Bacteriol.">
        <title>Complete genome sequence of Erythrobacter litoralis HTCC2594.</title>
        <authorList>
            <person name="Oh H.M."/>
            <person name="Giovannoni S.J."/>
            <person name="Ferriera S."/>
            <person name="Johnson J."/>
            <person name="Cho J.C."/>
        </authorList>
    </citation>
    <scope>NUCLEOTIDE SEQUENCE [LARGE SCALE GENOMIC DNA]</scope>
    <source>
        <strain>HTCC2594</strain>
    </source>
</reference>